<accession>Q8FTQ1</accession>
<organism>
    <name type="scientific">Corynebacterium efficiens (strain DSM 44549 / YS-314 / AJ 12310 / JCM 11189 / NBRC 100395)</name>
    <dbReference type="NCBI Taxonomy" id="196164"/>
    <lineage>
        <taxon>Bacteria</taxon>
        <taxon>Bacillati</taxon>
        <taxon>Actinomycetota</taxon>
        <taxon>Actinomycetes</taxon>
        <taxon>Mycobacteriales</taxon>
        <taxon>Corynebacteriaceae</taxon>
        <taxon>Corynebacterium</taxon>
    </lineage>
</organism>
<name>RL35_COREF</name>
<keyword id="KW-1185">Reference proteome</keyword>
<keyword id="KW-0687">Ribonucleoprotein</keyword>
<keyword id="KW-0689">Ribosomal protein</keyword>
<gene>
    <name evidence="1" type="primary">rpmI</name>
    <name type="ordered locus">CE1510</name>
</gene>
<comment type="similarity">
    <text evidence="1">Belongs to the bacterial ribosomal protein bL35 family.</text>
</comment>
<dbReference type="EMBL" id="BA000035">
    <property type="protein sequence ID" value="BAC18320.1"/>
    <property type="molecule type" value="Genomic_DNA"/>
</dbReference>
<dbReference type="RefSeq" id="WP_006770417.1">
    <property type="nucleotide sequence ID" value="NZ_GG700691.1"/>
</dbReference>
<dbReference type="SMR" id="Q8FTQ1"/>
<dbReference type="STRING" id="196164.gene:10741925"/>
<dbReference type="KEGG" id="cef:CE1510"/>
<dbReference type="eggNOG" id="COG0291">
    <property type="taxonomic scope" value="Bacteria"/>
</dbReference>
<dbReference type="HOGENOM" id="CLU_169643_4_2_11"/>
<dbReference type="OrthoDB" id="9804851at2"/>
<dbReference type="Proteomes" id="UP000001409">
    <property type="component" value="Chromosome"/>
</dbReference>
<dbReference type="GO" id="GO:0022625">
    <property type="term" value="C:cytosolic large ribosomal subunit"/>
    <property type="evidence" value="ECO:0007669"/>
    <property type="project" value="TreeGrafter"/>
</dbReference>
<dbReference type="GO" id="GO:0003735">
    <property type="term" value="F:structural constituent of ribosome"/>
    <property type="evidence" value="ECO:0007669"/>
    <property type="project" value="InterPro"/>
</dbReference>
<dbReference type="GO" id="GO:0006412">
    <property type="term" value="P:translation"/>
    <property type="evidence" value="ECO:0007669"/>
    <property type="project" value="UniProtKB-UniRule"/>
</dbReference>
<dbReference type="FunFam" id="4.10.410.60:FF:000001">
    <property type="entry name" value="50S ribosomal protein L35"/>
    <property type="match status" value="1"/>
</dbReference>
<dbReference type="Gene3D" id="4.10.410.60">
    <property type="match status" value="1"/>
</dbReference>
<dbReference type="HAMAP" id="MF_00514">
    <property type="entry name" value="Ribosomal_bL35"/>
    <property type="match status" value="1"/>
</dbReference>
<dbReference type="InterPro" id="IPR001706">
    <property type="entry name" value="Ribosomal_bL35"/>
</dbReference>
<dbReference type="InterPro" id="IPR021137">
    <property type="entry name" value="Ribosomal_bL35-like"/>
</dbReference>
<dbReference type="InterPro" id="IPR037229">
    <property type="entry name" value="Ribosomal_bL35_sf"/>
</dbReference>
<dbReference type="NCBIfam" id="TIGR00001">
    <property type="entry name" value="rpmI_bact"/>
    <property type="match status" value="1"/>
</dbReference>
<dbReference type="PANTHER" id="PTHR33343">
    <property type="entry name" value="54S RIBOSOMAL PROTEIN BL35M"/>
    <property type="match status" value="1"/>
</dbReference>
<dbReference type="PANTHER" id="PTHR33343:SF1">
    <property type="entry name" value="LARGE RIBOSOMAL SUBUNIT PROTEIN BL35M"/>
    <property type="match status" value="1"/>
</dbReference>
<dbReference type="Pfam" id="PF01632">
    <property type="entry name" value="Ribosomal_L35p"/>
    <property type="match status" value="1"/>
</dbReference>
<dbReference type="PRINTS" id="PR00064">
    <property type="entry name" value="RIBOSOMALL35"/>
</dbReference>
<dbReference type="SUPFAM" id="SSF143034">
    <property type="entry name" value="L35p-like"/>
    <property type="match status" value="1"/>
</dbReference>
<proteinExistence type="inferred from homology"/>
<feature type="chain" id="PRO_0000177354" description="Large ribosomal subunit protein bL35">
    <location>
        <begin position="1"/>
        <end position="64"/>
    </location>
</feature>
<feature type="region of interest" description="Disordered" evidence="2">
    <location>
        <begin position="1"/>
        <end position="30"/>
    </location>
</feature>
<feature type="compositionally biased region" description="Basic residues" evidence="2">
    <location>
        <begin position="1"/>
        <end position="14"/>
    </location>
</feature>
<feature type="compositionally biased region" description="Basic and acidic residues" evidence="2">
    <location>
        <begin position="21"/>
        <end position="30"/>
    </location>
</feature>
<reference key="1">
    <citation type="journal article" date="2003" name="Genome Res.">
        <title>Comparative complete genome sequence analysis of the amino acid replacements responsible for the thermostability of Corynebacterium efficiens.</title>
        <authorList>
            <person name="Nishio Y."/>
            <person name="Nakamura Y."/>
            <person name="Kawarabayasi Y."/>
            <person name="Usuda Y."/>
            <person name="Kimura E."/>
            <person name="Sugimoto S."/>
            <person name="Matsui K."/>
            <person name="Yamagishi A."/>
            <person name="Kikuchi H."/>
            <person name="Ikeo K."/>
            <person name="Gojobori T."/>
        </authorList>
    </citation>
    <scope>NUCLEOTIDE SEQUENCE [LARGE SCALE GENOMIC DNA]</scope>
    <source>
        <strain>DSM 44549 / YS-314 / AJ 12310 / JCM 11189 / NBRC 100395</strain>
    </source>
</reference>
<protein>
    <recommendedName>
        <fullName evidence="1">Large ribosomal subunit protein bL35</fullName>
    </recommendedName>
    <alternativeName>
        <fullName evidence="3">50S ribosomal protein L35</fullName>
    </alternativeName>
</protein>
<sequence>MKNKTHKGTAKRVKVTGSGKLVREQANRRHLLEGKPSTRTRRLKGIVEVSPADTKRMKRLLGKA</sequence>
<evidence type="ECO:0000255" key="1">
    <source>
        <dbReference type="HAMAP-Rule" id="MF_00514"/>
    </source>
</evidence>
<evidence type="ECO:0000256" key="2">
    <source>
        <dbReference type="SAM" id="MobiDB-lite"/>
    </source>
</evidence>
<evidence type="ECO:0000305" key="3"/>